<keyword id="KW-0963">Cytoplasm</keyword>
<keyword id="KW-0378">Hydrolase</keyword>
<keyword id="KW-0645">Protease</keyword>
<keyword id="KW-1185">Reference proteome</keyword>
<keyword id="KW-0833">Ubl conjugation pathway</keyword>
<evidence type="ECO:0000250" key="1">
    <source>
        <dbReference type="UniProtKB" id="Q9BSY9"/>
    </source>
</evidence>
<evidence type="ECO:0000250" key="2">
    <source>
        <dbReference type="UniProtKB" id="Q9D291"/>
    </source>
</evidence>
<evidence type="ECO:0000255" key="3">
    <source>
        <dbReference type="PROSITE-ProRule" id="PRU01205"/>
    </source>
</evidence>
<evidence type="ECO:0000256" key="4">
    <source>
        <dbReference type="SAM" id="MobiDB-lite"/>
    </source>
</evidence>
<evidence type="ECO:0000305" key="5"/>
<feature type="chain" id="PRO_0000221632" description="Deubiquitinase DESI2">
    <location>
        <begin position="1"/>
        <end position="194"/>
    </location>
</feature>
<feature type="domain" description="PPPDE" evidence="3">
    <location>
        <begin position="5"/>
        <end position="149"/>
    </location>
</feature>
<feature type="region of interest" description="Disordered" evidence="4">
    <location>
        <begin position="162"/>
        <end position="194"/>
    </location>
</feature>
<feature type="compositionally biased region" description="Acidic residues" evidence="4">
    <location>
        <begin position="163"/>
        <end position="172"/>
    </location>
</feature>
<feature type="compositionally biased region" description="Low complexity" evidence="4">
    <location>
        <begin position="173"/>
        <end position="184"/>
    </location>
</feature>
<feature type="active site" evidence="3">
    <location>
        <position position="30"/>
    </location>
</feature>
<feature type="active site" evidence="1 3">
    <location>
        <position position="108"/>
    </location>
</feature>
<proteinExistence type="evidence at transcript level"/>
<protein>
    <recommendedName>
        <fullName evidence="1">Deubiquitinase DESI2</fullName>
        <ecNumber evidence="1">3.4.19.12</ecNumber>
    </recommendedName>
    <alternativeName>
        <fullName>Desumoylating isopeptidase 2</fullName>
        <shortName>DeSI-2</shortName>
    </alternativeName>
    <alternativeName>
        <fullName>PPPDE peptidase domain-containing protein 1</fullName>
    </alternativeName>
    <alternativeName>
        <fullName>Palmitoyl protein thioesterase DESI2</fullName>
        <ecNumber evidence="1">3.1.2.22</ecNumber>
    </alternativeName>
    <alternativeName>
        <fullName>Protein FAM152A</fullName>
    </alternativeName>
    <alternativeName>
        <fullName>S-depalmitoylase DESI2</fullName>
    </alternativeName>
</protein>
<reference key="1">
    <citation type="submission" date="2004-11" db="EMBL/GenBank/DDBJ databases">
        <authorList>
            <consortium name="The German cDNA consortium"/>
        </authorList>
    </citation>
    <scope>NUCLEOTIDE SEQUENCE [LARGE SCALE MRNA]</scope>
    <source>
        <tissue>Brain cortex</tissue>
    </source>
</reference>
<name>DESI2_PONAB</name>
<gene>
    <name type="primary">DESI2</name>
    <name type="synonym">FAM152A</name>
    <name type="synonym">PPPDE1</name>
</gene>
<accession>Q5R456</accession>
<comment type="function">
    <text evidence="1">Has deubiquitinating activity towards 'Lys-48'- and 'Lys-63'-linked polyubiquitin chains. Deubiquitinates 'Lys-48'-linked polyubiquitination of RPS7 leading to its stabilization. Exhibits palmitoyl protein thioesterase (S-depalmitoylation) activity towards synthetic substrates 4-methylumbelliferyl-6-S-palmitoyl-beta-D-glucopyranoside and S-depalmitoylation probe 5 (DPP-5).</text>
</comment>
<comment type="catalytic activity">
    <reaction evidence="1">
        <text>Thiol-dependent hydrolysis of ester, thioester, amide, peptide and isopeptide bonds formed by the C-terminal Gly of ubiquitin (a 76-residue protein attached to proteins as an intracellular targeting signal).</text>
        <dbReference type="EC" id="3.4.19.12"/>
    </reaction>
</comment>
<comment type="catalytic activity">
    <reaction evidence="1">
        <text>S-hexadecanoyl-L-cysteinyl-[protein] + H2O = L-cysteinyl-[protein] + hexadecanoate + H(+)</text>
        <dbReference type="Rhea" id="RHEA:19233"/>
        <dbReference type="Rhea" id="RHEA-COMP:10131"/>
        <dbReference type="Rhea" id="RHEA-COMP:11032"/>
        <dbReference type="ChEBI" id="CHEBI:7896"/>
        <dbReference type="ChEBI" id="CHEBI:15377"/>
        <dbReference type="ChEBI" id="CHEBI:15378"/>
        <dbReference type="ChEBI" id="CHEBI:29950"/>
        <dbReference type="ChEBI" id="CHEBI:74151"/>
        <dbReference type="EC" id="3.1.2.22"/>
    </reaction>
    <physiologicalReaction direction="left-to-right" evidence="1">
        <dbReference type="Rhea" id="RHEA:19234"/>
    </physiologicalReaction>
</comment>
<comment type="subunit">
    <text evidence="1">Interacts with RPS7.</text>
</comment>
<comment type="subcellular location">
    <subcellularLocation>
        <location evidence="2">Cytoplasm</location>
    </subcellularLocation>
</comment>
<comment type="similarity">
    <text evidence="5">Belongs to the DeSI family.</text>
</comment>
<organism>
    <name type="scientific">Pongo abelii</name>
    <name type="common">Sumatran orangutan</name>
    <name type="synonym">Pongo pygmaeus abelii</name>
    <dbReference type="NCBI Taxonomy" id="9601"/>
    <lineage>
        <taxon>Eukaryota</taxon>
        <taxon>Metazoa</taxon>
        <taxon>Chordata</taxon>
        <taxon>Craniata</taxon>
        <taxon>Vertebrata</taxon>
        <taxon>Euteleostomi</taxon>
        <taxon>Mammalia</taxon>
        <taxon>Eutheria</taxon>
        <taxon>Euarchontoglires</taxon>
        <taxon>Primates</taxon>
        <taxon>Haplorrhini</taxon>
        <taxon>Catarrhini</taxon>
        <taxon>Hominidae</taxon>
        <taxon>Pongo</taxon>
    </lineage>
</organism>
<dbReference type="EC" id="3.4.19.12" evidence="1"/>
<dbReference type="EC" id="3.1.2.22" evidence="1"/>
<dbReference type="EMBL" id="CR861402">
    <property type="protein sequence ID" value="CAH93460.1"/>
    <property type="molecule type" value="mRNA"/>
</dbReference>
<dbReference type="RefSeq" id="NP_001127027.1">
    <property type="nucleotide sequence ID" value="NM_001133555.1"/>
</dbReference>
<dbReference type="SMR" id="Q5R456"/>
<dbReference type="FunCoup" id="Q5R456">
    <property type="interactions" value="1613"/>
</dbReference>
<dbReference type="STRING" id="9601.ENSPPYP00000000052"/>
<dbReference type="MEROPS" id="C97.002"/>
<dbReference type="Ensembl" id="ENSPPYT00000046807.1">
    <property type="protein sequence ID" value="ENSPPYP00000042933.1"/>
    <property type="gene ID" value="ENSPPYG00000000055.2"/>
</dbReference>
<dbReference type="GeneID" id="100174052"/>
<dbReference type="KEGG" id="pon:100174052"/>
<dbReference type="CTD" id="51029"/>
<dbReference type="eggNOG" id="KOG0324">
    <property type="taxonomic scope" value="Eukaryota"/>
</dbReference>
<dbReference type="GeneTree" id="ENSGT00730000111005"/>
<dbReference type="HOGENOM" id="CLU_069001_5_1_1"/>
<dbReference type="InParanoid" id="Q5R456"/>
<dbReference type="OrthoDB" id="412286at2759"/>
<dbReference type="Proteomes" id="UP000001595">
    <property type="component" value="Chromosome 1"/>
</dbReference>
<dbReference type="GO" id="GO:0005737">
    <property type="term" value="C:cytoplasm"/>
    <property type="evidence" value="ECO:0000250"/>
    <property type="project" value="UniProtKB"/>
</dbReference>
<dbReference type="GO" id="GO:0004843">
    <property type="term" value="F:cysteine-type deubiquitinase activity"/>
    <property type="evidence" value="ECO:0007669"/>
    <property type="project" value="UniProtKB-EC"/>
</dbReference>
<dbReference type="GO" id="GO:1990380">
    <property type="term" value="F:K48-linked deubiquitinase activity"/>
    <property type="evidence" value="ECO:0000250"/>
    <property type="project" value="UniProtKB"/>
</dbReference>
<dbReference type="GO" id="GO:0061578">
    <property type="term" value="F:K63-linked deubiquitinase activity"/>
    <property type="evidence" value="ECO:0000250"/>
    <property type="project" value="UniProtKB"/>
</dbReference>
<dbReference type="GO" id="GO:0052816">
    <property type="term" value="F:long-chain fatty acyl-CoA hydrolase activity"/>
    <property type="evidence" value="ECO:0000250"/>
    <property type="project" value="UniProtKB"/>
</dbReference>
<dbReference type="GO" id="GO:0008474">
    <property type="term" value="F:palmitoyl-(protein) hydrolase activity"/>
    <property type="evidence" value="ECO:0007669"/>
    <property type="project" value="RHEA"/>
</dbReference>
<dbReference type="GO" id="GO:0016579">
    <property type="term" value="P:protein deubiquitination"/>
    <property type="evidence" value="ECO:0007669"/>
    <property type="project" value="TreeGrafter"/>
</dbReference>
<dbReference type="GO" id="GO:0006508">
    <property type="term" value="P:proteolysis"/>
    <property type="evidence" value="ECO:0007669"/>
    <property type="project" value="UniProtKB-KW"/>
</dbReference>
<dbReference type="FunFam" id="3.90.1720.30:FF:000001">
    <property type="entry name" value="desumoylating isopeptidase 2"/>
    <property type="match status" value="1"/>
</dbReference>
<dbReference type="Gene3D" id="3.90.1720.30">
    <property type="entry name" value="PPPDE domains"/>
    <property type="match status" value="1"/>
</dbReference>
<dbReference type="InterPro" id="IPR008580">
    <property type="entry name" value="PPPDE_dom"/>
</dbReference>
<dbReference type="InterPro" id="IPR042266">
    <property type="entry name" value="PPPDE_sf"/>
</dbReference>
<dbReference type="PANTHER" id="PTHR12378">
    <property type="entry name" value="DESUMOYLATING ISOPEPTIDASE"/>
    <property type="match status" value="1"/>
</dbReference>
<dbReference type="PANTHER" id="PTHR12378:SF6">
    <property type="entry name" value="DEUBIQUITINASE DESI2"/>
    <property type="match status" value="1"/>
</dbReference>
<dbReference type="Pfam" id="PF05903">
    <property type="entry name" value="Peptidase_C97"/>
    <property type="match status" value="1"/>
</dbReference>
<dbReference type="SMART" id="SM01179">
    <property type="entry name" value="DUF862"/>
    <property type="match status" value="1"/>
</dbReference>
<dbReference type="PROSITE" id="PS51858">
    <property type="entry name" value="PPPDE"/>
    <property type="match status" value="1"/>
</dbReference>
<sequence>MGANQLVVLNVYDMYWMNEYTSSIGIGVFHSGIEVYGREFAYGGHPYPFSGIFEISPGNASELGETFKFKEAVVLGSTDFLEDDIEKIVEELGKEYKGNAYHLMHKNCNHFSSALSEILCGKEIPRWINRLAYFSSCIPFLQSCLPKEWLTPAALQSSVSQELQDELEEAEDAAASASAASTAAGSRPGRHTKL</sequence>